<sequence length="195" mass="20610">MKKYLFVALAALVLTGCLSRPPEPEQPQPPVTVEPVTPPVVEEPQPPVTEPVPQPPKIQQLDWLSSVQPLVNQMLKADGVNPGSVLLLDSVKNNTNGSLQTAKATSALHKALASNQTFSIVPEAQLATAKQTLGLSADDSLGSRSKAIGLARIVSAQYVLYSDVSGDVKSPTLDMQLMLVQSGEIVWSGNGAVTH</sequence>
<proteinExistence type="inferred from homology"/>
<feature type="signal peptide" evidence="1">
    <location>
        <begin position="1"/>
        <end position="16"/>
    </location>
</feature>
<feature type="chain" id="PRO_5000279286" description="Penicillin-binding protein activator LpoB">
    <location>
        <begin position="17"/>
        <end position="195"/>
    </location>
</feature>
<feature type="region of interest" description="Disordered" evidence="2">
    <location>
        <begin position="19"/>
        <end position="55"/>
    </location>
</feature>
<feature type="compositionally biased region" description="Pro residues" evidence="2">
    <location>
        <begin position="24"/>
        <end position="38"/>
    </location>
</feature>
<feature type="compositionally biased region" description="Pro residues" evidence="2">
    <location>
        <begin position="44"/>
        <end position="55"/>
    </location>
</feature>
<feature type="lipid moiety-binding region" description="N-palmitoyl cysteine" evidence="1">
    <location>
        <position position="17"/>
    </location>
</feature>
<feature type="lipid moiety-binding region" description="S-diacylglycerol cysteine" evidence="1">
    <location>
        <position position="17"/>
    </location>
</feature>
<protein>
    <recommendedName>
        <fullName evidence="1">Penicillin-binding protein activator LpoB</fullName>
        <shortName evidence="1">PBP activator LpoB</shortName>
    </recommendedName>
</protein>
<accession>A8GD35</accession>
<name>LPOB_SERP5</name>
<gene>
    <name evidence="1" type="primary">lpoB</name>
    <name type="ordered locus">Spro_1922</name>
</gene>
<evidence type="ECO:0000255" key="1">
    <source>
        <dbReference type="HAMAP-Rule" id="MF_01889"/>
    </source>
</evidence>
<evidence type="ECO:0000256" key="2">
    <source>
        <dbReference type="SAM" id="MobiDB-lite"/>
    </source>
</evidence>
<dbReference type="EMBL" id="CP000826">
    <property type="protein sequence ID" value="ABV41025.1"/>
    <property type="molecule type" value="Genomic_DNA"/>
</dbReference>
<dbReference type="SMR" id="A8GD35"/>
<dbReference type="STRING" id="399741.Spro_1922"/>
<dbReference type="KEGG" id="spe:Spro_1922"/>
<dbReference type="eggNOG" id="COG3417">
    <property type="taxonomic scope" value="Bacteria"/>
</dbReference>
<dbReference type="HOGENOM" id="CLU_092328_0_0_6"/>
<dbReference type="OrthoDB" id="6466283at2"/>
<dbReference type="GO" id="GO:0031241">
    <property type="term" value="C:periplasmic side of cell outer membrane"/>
    <property type="evidence" value="ECO:0007669"/>
    <property type="project" value="UniProtKB-UniRule"/>
</dbReference>
<dbReference type="GO" id="GO:0030234">
    <property type="term" value="F:enzyme regulator activity"/>
    <property type="evidence" value="ECO:0007669"/>
    <property type="project" value="UniProtKB-UniRule"/>
</dbReference>
<dbReference type="GO" id="GO:0009252">
    <property type="term" value="P:peptidoglycan biosynthetic process"/>
    <property type="evidence" value="ECO:0007669"/>
    <property type="project" value="UniProtKB-UniRule"/>
</dbReference>
<dbReference type="GO" id="GO:0008360">
    <property type="term" value="P:regulation of cell shape"/>
    <property type="evidence" value="ECO:0007669"/>
    <property type="project" value="UniProtKB-KW"/>
</dbReference>
<dbReference type="Gene3D" id="3.40.50.10610">
    <property type="entry name" value="ABC-type transport auxiliary lipoprotein component"/>
    <property type="match status" value="1"/>
</dbReference>
<dbReference type="HAMAP" id="MF_01889">
    <property type="entry name" value="LpoB"/>
    <property type="match status" value="1"/>
</dbReference>
<dbReference type="InterPro" id="IPR014094">
    <property type="entry name" value="LpoB"/>
</dbReference>
<dbReference type="InterPro" id="IPR012640">
    <property type="entry name" value="Membr_lipoprot_lipid_attach_CS"/>
</dbReference>
<dbReference type="NCBIfam" id="TIGR02722">
    <property type="entry name" value="lp"/>
    <property type="match status" value="1"/>
</dbReference>
<dbReference type="PANTHER" id="PTHR40593">
    <property type="entry name" value="PENICILLIN-BINDING PROTEIN ACTIVATOR LPOB"/>
    <property type="match status" value="1"/>
</dbReference>
<dbReference type="PANTHER" id="PTHR40593:SF1">
    <property type="entry name" value="PENICILLIN-BINDING PROTEIN ACTIVATOR LPOB"/>
    <property type="match status" value="1"/>
</dbReference>
<dbReference type="Pfam" id="PF08139">
    <property type="entry name" value="LPAM_1"/>
    <property type="match status" value="1"/>
</dbReference>
<dbReference type="Pfam" id="PF13036">
    <property type="entry name" value="LpoB"/>
    <property type="match status" value="1"/>
</dbReference>
<dbReference type="PROSITE" id="PS51257">
    <property type="entry name" value="PROKAR_LIPOPROTEIN"/>
    <property type="match status" value="1"/>
</dbReference>
<reference key="1">
    <citation type="submission" date="2007-09" db="EMBL/GenBank/DDBJ databases">
        <title>Complete sequence of chromosome of Serratia proteamaculans 568.</title>
        <authorList>
            <consortium name="US DOE Joint Genome Institute"/>
            <person name="Copeland A."/>
            <person name="Lucas S."/>
            <person name="Lapidus A."/>
            <person name="Barry K."/>
            <person name="Glavina del Rio T."/>
            <person name="Dalin E."/>
            <person name="Tice H."/>
            <person name="Pitluck S."/>
            <person name="Chain P."/>
            <person name="Malfatti S."/>
            <person name="Shin M."/>
            <person name="Vergez L."/>
            <person name="Schmutz J."/>
            <person name="Larimer F."/>
            <person name="Land M."/>
            <person name="Hauser L."/>
            <person name="Kyrpides N."/>
            <person name="Kim E."/>
            <person name="Taghavi S."/>
            <person name="Newman L."/>
            <person name="Vangronsveld J."/>
            <person name="van der Lelie D."/>
            <person name="Richardson P."/>
        </authorList>
    </citation>
    <scope>NUCLEOTIDE SEQUENCE [LARGE SCALE GENOMIC DNA]</scope>
    <source>
        <strain>568</strain>
    </source>
</reference>
<organism>
    <name type="scientific">Serratia proteamaculans (strain 568)</name>
    <dbReference type="NCBI Taxonomy" id="399741"/>
    <lineage>
        <taxon>Bacteria</taxon>
        <taxon>Pseudomonadati</taxon>
        <taxon>Pseudomonadota</taxon>
        <taxon>Gammaproteobacteria</taxon>
        <taxon>Enterobacterales</taxon>
        <taxon>Yersiniaceae</taxon>
        <taxon>Serratia</taxon>
    </lineage>
</organism>
<comment type="function">
    <text evidence="1">Regulator of peptidoglycan synthesis that is essential for the function of penicillin-binding protein 1B (PBP1b).</text>
</comment>
<comment type="subunit">
    <text evidence="1">Interacts with PBP1b.</text>
</comment>
<comment type="subcellular location">
    <subcellularLocation>
        <location evidence="1">Cell outer membrane</location>
        <topology evidence="1">Lipid-anchor</topology>
        <orientation evidence="1">Periplasmic side</orientation>
    </subcellularLocation>
</comment>
<comment type="similarity">
    <text evidence="1">Belongs to the LpoB family.</text>
</comment>
<keyword id="KW-0998">Cell outer membrane</keyword>
<keyword id="KW-0133">Cell shape</keyword>
<keyword id="KW-0449">Lipoprotein</keyword>
<keyword id="KW-0472">Membrane</keyword>
<keyword id="KW-0564">Palmitate</keyword>
<keyword id="KW-0573">Peptidoglycan synthesis</keyword>
<keyword id="KW-0732">Signal</keyword>